<feature type="chain" id="PRO_1000206614" description="Small ribosomal subunit protein eS17">
    <location>
        <begin position="1"/>
        <end position="79"/>
    </location>
</feature>
<sequence>MGNIYTKDIKRIVKEIYNQYKDEIKDDYNTNKQIVVRYVDVKSKKVRNRIAGYLTRYYKIMKEKETSPTEEKEEISEEI</sequence>
<reference key="1">
    <citation type="journal article" date="2009" name="Proc. Natl. Acad. Sci. U.S.A.">
        <title>Biogeography of the Sulfolobus islandicus pan-genome.</title>
        <authorList>
            <person name="Reno M.L."/>
            <person name="Held N.L."/>
            <person name="Fields C.J."/>
            <person name="Burke P.V."/>
            <person name="Whitaker R.J."/>
        </authorList>
    </citation>
    <scope>NUCLEOTIDE SEQUENCE [LARGE SCALE GENOMIC DNA]</scope>
    <source>
        <strain>M.16.27</strain>
    </source>
</reference>
<organism>
    <name type="scientific">Saccharolobus islandicus (strain M.16.27)</name>
    <name type="common">Sulfolobus islandicus</name>
    <dbReference type="NCBI Taxonomy" id="427318"/>
    <lineage>
        <taxon>Archaea</taxon>
        <taxon>Thermoproteota</taxon>
        <taxon>Thermoprotei</taxon>
        <taxon>Sulfolobales</taxon>
        <taxon>Sulfolobaceae</taxon>
        <taxon>Saccharolobus</taxon>
    </lineage>
</organism>
<keyword id="KW-0687">Ribonucleoprotein</keyword>
<keyword id="KW-0689">Ribosomal protein</keyword>
<evidence type="ECO:0000255" key="1">
    <source>
        <dbReference type="HAMAP-Rule" id="MF_00511"/>
    </source>
</evidence>
<evidence type="ECO:0000305" key="2"/>
<accession>C3MZH2</accession>
<proteinExistence type="inferred from homology"/>
<gene>
    <name evidence="1" type="primary">rps17e</name>
    <name type="ordered locus">M1627_1933</name>
</gene>
<protein>
    <recommendedName>
        <fullName evidence="1">Small ribosomal subunit protein eS17</fullName>
    </recommendedName>
    <alternativeName>
        <fullName evidence="2">30S ribosomal protein S17e</fullName>
    </alternativeName>
</protein>
<comment type="similarity">
    <text evidence="1">Belongs to the eukaryotic ribosomal protein eS17 family.</text>
</comment>
<dbReference type="EMBL" id="CP001401">
    <property type="protein sequence ID" value="ACP55804.1"/>
    <property type="molecule type" value="Genomic_DNA"/>
</dbReference>
<dbReference type="RefSeq" id="WP_012711820.1">
    <property type="nucleotide sequence ID" value="NC_012632.1"/>
</dbReference>
<dbReference type="SMR" id="C3MZH2"/>
<dbReference type="KEGG" id="sim:M1627_1933"/>
<dbReference type="HOGENOM" id="CLU_176720_0_0_2"/>
<dbReference type="Proteomes" id="UP000002307">
    <property type="component" value="Chromosome"/>
</dbReference>
<dbReference type="GO" id="GO:0005829">
    <property type="term" value="C:cytosol"/>
    <property type="evidence" value="ECO:0007669"/>
    <property type="project" value="UniProtKB-ARBA"/>
</dbReference>
<dbReference type="GO" id="GO:1990904">
    <property type="term" value="C:ribonucleoprotein complex"/>
    <property type="evidence" value="ECO:0007669"/>
    <property type="project" value="UniProtKB-KW"/>
</dbReference>
<dbReference type="GO" id="GO:0005840">
    <property type="term" value="C:ribosome"/>
    <property type="evidence" value="ECO:0007669"/>
    <property type="project" value="UniProtKB-KW"/>
</dbReference>
<dbReference type="GO" id="GO:0003735">
    <property type="term" value="F:structural constituent of ribosome"/>
    <property type="evidence" value="ECO:0007669"/>
    <property type="project" value="InterPro"/>
</dbReference>
<dbReference type="GO" id="GO:0006412">
    <property type="term" value="P:translation"/>
    <property type="evidence" value="ECO:0007669"/>
    <property type="project" value="UniProtKB-UniRule"/>
</dbReference>
<dbReference type="Gene3D" id="1.10.60.20">
    <property type="entry name" value="Ribosomal protein S17e-like"/>
    <property type="match status" value="1"/>
</dbReference>
<dbReference type="HAMAP" id="MF_00511">
    <property type="entry name" value="Ribosomal_eS17"/>
    <property type="match status" value="1"/>
</dbReference>
<dbReference type="InterPro" id="IPR001210">
    <property type="entry name" value="Ribosomal_eS17"/>
</dbReference>
<dbReference type="InterPro" id="IPR018273">
    <property type="entry name" value="Ribosomal_eS17_CS"/>
</dbReference>
<dbReference type="InterPro" id="IPR036401">
    <property type="entry name" value="Ribosomal_eS17_sf"/>
</dbReference>
<dbReference type="NCBIfam" id="NF002242">
    <property type="entry name" value="PRK01151.1"/>
    <property type="match status" value="1"/>
</dbReference>
<dbReference type="PANTHER" id="PTHR10732">
    <property type="entry name" value="40S RIBOSOMAL PROTEIN S17"/>
    <property type="match status" value="1"/>
</dbReference>
<dbReference type="PANTHER" id="PTHR10732:SF0">
    <property type="entry name" value="40S RIBOSOMAL PROTEIN S17"/>
    <property type="match status" value="1"/>
</dbReference>
<dbReference type="Pfam" id="PF00833">
    <property type="entry name" value="Ribosomal_S17e"/>
    <property type="match status" value="1"/>
</dbReference>
<dbReference type="SUPFAM" id="SSF116820">
    <property type="entry name" value="Rps17e-like"/>
    <property type="match status" value="1"/>
</dbReference>
<dbReference type="PROSITE" id="PS00712">
    <property type="entry name" value="RIBOSOMAL_S17E"/>
    <property type="match status" value="1"/>
</dbReference>
<name>RS17E_SACI3</name>